<sequence>MISNLFTKIFGSRNDRTIKNLRKTVALINALETQLEALSDDDLKAKTAEFRERYDNGQSLDDLLPEAFAVVREASKRVNGMRHFDVQLLGGMVLHQGRIAEMRTGEGKTLTATLPAYLNGLTGKGVHVITVNDYLAKRDAETNRPLFEFLGLTVGCNVPGMMPQQKKQAYVADITYGTNNEFGFDYLRDNMAFSIDERVQRPLFYAVVDEVDSILIDEARTPLIISGPAEDSSELYTEINTMVPLLELQEKEDEEGIEGDGDFTIDEKSKQVHLTERGQIKVEELLTERGLIAEGDSLYSAASITLLSHVYAALRAHKLYQKDVDYVVKENEVIIIDEHTGRSMEGRRWSEGLHQAVEAKEGVNIQNENQTLASITFQNYFRLYETLAGMTGTADTEAFEFQSIYGLDTVVMPTNKPMVRDDRADLVYLTQEEKYEAILVDIKDCQERGQPVLVGTISIESSEYLSQFLRKEKIKHNVLNAKFHAQEADIVSDAGLPGTVTIATNMAGRGTDIVLGGNWHSEVEKLENPTDEQIAEIKAAWKIRHDAVIDAGGLHIIGTERHESRRIDNQLRGRSGRQGDAGSSRFYLSMDDALMRIFAGERMTNMMRKLGMQRGEAIEHPWVNRAIENAQRKVEARNFDVRKQLLEYDDVANDQRRVVYSQRNELLEEGDISETITVIRGDVLSNIIDQYIAPQSLAEMWDVPGLEERLKQDFLIELPITQWLADDNKLYEEKLRERIEESVGQAYKQKEEMVGDSVLRQFEKAIMLQSLDQHWKDHLAAMDHLRQGIHLRGYAQKNPKQEYKRESFELFAEMLENLKIDVVSILSKVQVRAEEDVEKVEEQHRKSENAPREYQHEEVEHVGGEAPQSATVMARSEPKVGRNDPCPCGSGQKFKQCCGKLK</sequence>
<comment type="function">
    <text evidence="1">Part of the Sec protein translocase complex. Interacts with the SecYEG preprotein conducting channel. Has a central role in coupling the hydrolysis of ATP to the transfer of proteins into and across the cell membrane, serving both as a receptor for the preprotein-SecB complex and as an ATP-driven molecular motor driving the stepwise translocation of polypeptide chains across the membrane.</text>
</comment>
<comment type="catalytic activity">
    <reaction evidence="1">
        <text>ATP + H2O + cellular proteinSide 1 = ADP + phosphate + cellular proteinSide 2.</text>
        <dbReference type="EC" id="7.4.2.8"/>
    </reaction>
</comment>
<comment type="cofactor">
    <cofactor evidence="1">
        <name>Zn(2+)</name>
        <dbReference type="ChEBI" id="CHEBI:29105"/>
    </cofactor>
    <text evidence="1">May bind 1 zinc ion per subunit.</text>
</comment>
<comment type="subunit">
    <text evidence="1">Monomer and homodimer. Part of the essential Sec protein translocation apparatus which comprises SecA, SecYEG and auxiliary proteins SecDF-YajC and YidC.</text>
</comment>
<comment type="subcellular location">
    <subcellularLocation>
        <location evidence="1">Cell inner membrane</location>
        <topology evidence="1">Peripheral membrane protein</topology>
        <orientation evidence="1">Cytoplasmic side</orientation>
    </subcellularLocation>
    <subcellularLocation>
        <location evidence="1">Cytoplasm</location>
    </subcellularLocation>
    <text evidence="1">Distribution is 50-50.</text>
</comment>
<comment type="similarity">
    <text evidence="1">Belongs to the SecA family.</text>
</comment>
<accession>Q3IJE7</accession>
<name>SECA_PSET1</name>
<reference key="1">
    <citation type="journal article" date="2005" name="Genome Res.">
        <title>Coping with cold: the genome of the versatile marine Antarctica bacterium Pseudoalteromonas haloplanktis TAC125.</title>
        <authorList>
            <person name="Medigue C."/>
            <person name="Krin E."/>
            <person name="Pascal G."/>
            <person name="Barbe V."/>
            <person name="Bernsel A."/>
            <person name="Bertin P.N."/>
            <person name="Cheung F."/>
            <person name="Cruveiller S."/>
            <person name="D'Amico S."/>
            <person name="Duilio A."/>
            <person name="Fang G."/>
            <person name="Feller G."/>
            <person name="Ho C."/>
            <person name="Mangenot S."/>
            <person name="Marino G."/>
            <person name="Nilsson J."/>
            <person name="Parrilli E."/>
            <person name="Rocha E.P.C."/>
            <person name="Rouy Z."/>
            <person name="Sekowska A."/>
            <person name="Tutino M.L."/>
            <person name="Vallenet D."/>
            <person name="von Heijne G."/>
            <person name="Danchin A."/>
        </authorList>
    </citation>
    <scope>NUCLEOTIDE SEQUENCE [LARGE SCALE GENOMIC DNA]</scope>
    <source>
        <strain>TAC 125</strain>
    </source>
</reference>
<keyword id="KW-0067">ATP-binding</keyword>
<keyword id="KW-0997">Cell inner membrane</keyword>
<keyword id="KW-1003">Cell membrane</keyword>
<keyword id="KW-0963">Cytoplasm</keyword>
<keyword id="KW-0472">Membrane</keyword>
<keyword id="KW-0479">Metal-binding</keyword>
<keyword id="KW-0547">Nucleotide-binding</keyword>
<keyword id="KW-0653">Protein transport</keyword>
<keyword id="KW-1185">Reference proteome</keyword>
<keyword id="KW-1278">Translocase</keyword>
<keyword id="KW-0811">Translocation</keyword>
<keyword id="KW-0813">Transport</keyword>
<keyword id="KW-0862">Zinc</keyword>
<evidence type="ECO:0000255" key="1">
    <source>
        <dbReference type="HAMAP-Rule" id="MF_01382"/>
    </source>
</evidence>
<evidence type="ECO:0000256" key="2">
    <source>
        <dbReference type="SAM" id="MobiDB-lite"/>
    </source>
</evidence>
<dbReference type="EC" id="7.4.2.8" evidence="1"/>
<dbReference type="EMBL" id="CR954246">
    <property type="protein sequence ID" value="CAI87791.1"/>
    <property type="molecule type" value="Genomic_DNA"/>
</dbReference>
<dbReference type="SMR" id="Q3IJE7"/>
<dbReference type="STRING" id="326442.PSHAa2743"/>
<dbReference type="KEGG" id="pha:PSHAa2743"/>
<dbReference type="PATRIC" id="fig|326442.8.peg.2653"/>
<dbReference type="eggNOG" id="COG0653">
    <property type="taxonomic scope" value="Bacteria"/>
</dbReference>
<dbReference type="HOGENOM" id="CLU_005314_3_0_6"/>
<dbReference type="BioCyc" id="PHAL326442:PSHA_RS13490-MONOMER"/>
<dbReference type="Proteomes" id="UP000006843">
    <property type="component" value="Chromosome I"/>
</dbReference>
<dbReference type="GO" id="GO:0031522">
    <property type="term" value="C:cell envelope Sec protein transport complex"/>
    <property type="evidence" value="ECO:0007669"/>
    <property type="project" value="TreeGrafter"/>
</dbReference>
<dbReference type="GO" id="GO:0005829">
    <property type="term" value="C:cytosol"/>
    <property type="evidence" value="ECO:0007669"/>
    <property type="project" value="TreeGrafter"/>
</dbReference>
<dbReference type="GO" id="GO:0005886">
    <property type="term" value="C:plasma membrane"/>
    <property type="evidence" value="ECO:0007669"/>
    <property type="project" value="UniProtKB-SubCell"/>
</dbReference>
<dbReference type="GO" id="GO:0005524">
    <property type="term" value="F:ATP binding"/>
    <property type="evidence" value="ECO:0007669"/>
    <property type="project" value="UniProtKB-UniRule"/>
</dbReference>
<dbReference type="GO" id="GO:0046872">
    <property type="term" value="F:metal ion binding"/>
    <property type="evidence" value="ECO:0007669"/>
    <property type="project" value="UniProtKB-KW"/>
</dbReference>
<dbReference type="GO" id="GO:0008564">
    <property type="term" value="F:protein-exporting ATPase activity"/>
    <property type="evidence" value="ECO:0007669"/>
    <property type="project" value="UniProtKB-EC"/>
</dbReference>
<dbReference type="GO" id="GO:0065002">
    <property type="term" value="P:intracellular protein transmembrane transport"/>
    <property type="evidence" value="ECO:0007669"/>
    <property type="project" value="UniProtKB-UniRule"/>
</dbReference>
<dbReference type="GO" id="GO:0017038">
    <property type="term" value="P:protein import"/>
    <property type="evidence" value="ECO:0007669"/>
    <property type="project" value="InterPro"/>
</dbReference>
<dbReference type="GO" id="GO:0006605">
    <property type="term" value="P:protein targeting"/>
    <property type="evidence" value="ECO:0007669"/>
    <property type="project" value="UniProtKB-UniRule"/>
</dbReference>
<dbReference type="GO" id="GO:0043952">
    <property type="term" value="P:protein transport by the Sec complex"/>
    <property type="evidence" value="ECO:0007669"/>
    <property type="project" value="TreeGrafter"/>
</dbReference>
<dbReference type="CDD" id="cd17928">
    <property type="entry name" value="DEXDc_SecA"/>
    <property type="match status" value="1"/>
</dbReference>
<dbReference type="CDD" id="cd18803">
    <property type="entry name" value="SF2_C_secA"/>
    <property type="match status" value="1"/>
</dbReference>
<dbReference type="FunFam" id="1.10.3060.10:FF:000001">
    <property type="entry name" value="Preprotein translocase subunit SecA"/>
    <property type="match status" value="1"/>
</dbReference>
<dbReference type="FunFam" id="3.40.50.300:FF:000081">
    <property type="entry name" value="Preprotein translocase subunit SecA"/>
    <property type="match status" value="1"/>
</dbReference>
<dbReference type="FunFam" id="3.40.50.300:FF:000113">
    <property type="entry name" value="Preprotein translocase subunit SecA"/>
    <property type="match status" value="1"/>
</dbReference>
<dbReference type="FunFam" id="3.90.1440.10:FF:000001">
    <property type="entry name" value="Preprotein translocase subunit SecA"/>
    <property type="match status" value="1"/>
</dbReference>
<dbReference type="Gene3D" id="1.10.3060.10">
    <property type="entry name" value="Helical scaffold and wing domains of SecA"/>
    <property type="match status" value="1"/>
</dbReference>
<dbReference type="Gene3D" id="3.40.50.300">
    <property type="entry name" value="P-loop containing nucleotide triphosphate hydrolases"/>
    <property type="match status" value="2"/>
</dbReference>
<dbReference type="Gene3D" id="3.90.1440.10">
    <property type="entry name" value="SecA, preprotein cross-linking domain"/>
    <property type="match status" value="1"/>
</dbReference>
<dbReference type="HAMAP" id="MF_01382">
    <property type="entry name" value="SecA"/>
    <property type="match status" value="1"/>
</dbReference>
<dbReference type="InterPro" id="IPR014001">
    <property type="entry name" value="Helicase_ATP-bd"/>
</dbReference>
<dbReference type="InterPro" id="IPR027417">
    <property type="entry name" value="P-loop_NTPase"/>
</dbReference>
<dbReference type="InterPro" id="IPR004027">
    <property type="entry name" value="SEC_C_motif"/>
</dbReference>
<dbReference type="InterPro" id="IPR000185">
    <property type="entry name" value="SecA"/>
</dbReference>
<dbReference type="InterPro" id="IPR020937">
    <property type="entry name" value="SecA_CS"/>
</dbReference>
<dbReference type="InterPro" id="IPR011115">
    <property type="entry name" value="SecA_DEAD"/>
</dbReference>
<dbReference type="InterPro" id="IPR014018">
    <property type="entry name" value="SecA_motor_DEAD"/>
</dbReference>
<dbReference type="InterPro" id="IPR011130">
    <property type="entry name" value="SecA_preprotein_X-link_dom"/>
</dbReference>
<dbReference type="InterPro" id="IPR044722">
    <property type="entry name" value="SecA_SF2_C"/>
</dbReference>
<dbReference type="InterPro" id="IPR011116">
    <property type="entry name" value="SecA_Wing/Scaffold"/>
</dbReference>
<dbReference type="InterPro" id="IPR036266">
    <property type="entry name" value="SecA_Wing/Scaffold_sf"/>
</dbReference>
<dbReference type="InterPro" id="IPR036670">
    <property type="entry name" value="SecA_X-link_sf"/>
</dbReference>
<dbReference type="NCBIfam" id="NF009538">
    <property type="entry name" value="PRK12904.1"/>
    <property type="match status" value="1"/>
</dbReference>
<dbReference type="NCBIfam" id="TIGR00963">
    <property type="entry name" value="secA"/>
    <property type="match status" value="1"/>
</dbReference>
<dbReference type="PANTHER" id="PTHR30612:SF0">
    <property type="entry name" value="CHLOROPLAST PROTEIN-TRANSPORTING ATPASE"/>
    <property type="match status" value="1"/>
</dbReference>
<dbReference type="PANTHER" id="PTHR30612">
    <property type="entry name" value="SECA INNER MEMBRANE COMPONENT OF SEC PROTEIN SECRETION SYSTEM"/>
    <property type="match status" value="1"/>
</dbReference>
<dbReference type="Pfam" id="PF21090">
    <property type="entry name" value="P-loop_SecA"/>
    <property type="match status" value="1"/>
</dbReference>
<dbReference type="Pfam" id="PF02810">
    <property type="entry name" value="SEC-C"/>
    <property type="match status" value="1"/>
</dbReference>
<dbReference type="Pfam" id="PF07517">
    <property type="entry name" value="SecA_DEAD"/>
    <property type="match status" value="1"/>
</dbReference>
<dbReference type="Pfam" id="PF01043">
    <property type="entry name" value="SecA_PP_bind"/>
    <property type="match status" value="1"/>
</dbReference>
<dbReference type="Pfam" id="PF07516">
    <property type="entry name" value="SecA_SW"/>
    <property type="match status" value="1"/>
</dbReference>
<dbReference type="PRINTS" id="PR00906">
    <property type="entry name" value="SECA"/>
</dbReference>
<dbReference type="SMART" id="SM00957">
    <property type="entry name" value="SecA_DEAD"/>
    <property type="match status" value="1"/>
</dbReference>
<dbReference type="SMART" id="SM00958">
    <property type="entry name" value="SecA_PP_bind"/>
    <property type="match status" value="1"/>
</dbReference>
<dbReference type="SUPFAM" id="SSF81886">
    <property type="entry name" value="Helical scaffold and wing domains of SecA"/>
    <property type="match status" value="1"/>
</dbReference>
<dbReference type="SUPFAM" id="SSF52540">
    <property type="entry name" value="P-loop containing nucleoside triphosphate hydrolases"/>
    <property type="match status" value="2"/>
</dbReference>
<dbReference type="SUPFAM" id="SSF81767">
    <property type="entry name" value="Pre-protein crosslinking domain of SecA"/>
    <property type="match status" value="1"/>
</dbReference>
<dbReference type="PROSITE" id="PS01312">
    <property type="entry name" value="SECA"/>
    <property type="match status" value="1"/>
</dbReference>
<dbReference type="PROSITE" id="PS51196">
    <property type="entry name" value="SECA_MOTOR_DEAD"/>
    <property type="match status" value="1"/>
</dbReference>
<gene>
    <name evidence="1" type="primary">secA</name>
    <name type="ordered locus">PSHAa2743</name>
</gene>
<protein>
    <recommendedName>
        <fullName evidence="1">Protein translocase subunit SecA</fullName>
        <ecNumber evidence="1">7.4.2.8</ecNumber>
    </recommendedName>
</protein>
<proteinExistence type="inferred from homology"/>
<feature type="chain" id="PRO_0000320893" description="Protein translocase subunit SecA">
    <location>
        <begin position="1"/>
        <end position="902"/>
    </location>
</feature>
<feature type="region of interest" description="Disordered" evidence="2">
    <location>
        <begin position="836"/>
        <end position="902"/>
    </location>
</feature>
<feature type="compositionally biased region" description="Basic and acidic residues" evidence="2">
    <location>
        <begin position="840"/>
        <end position="863"/>
    </location>
</feature>
<feature type="binding site" evidence="1">
    <location>
        <position position="87"/>
    </location>
    <ligand>
        <name>ATP</name>
        <dbReference type="ChEBI" id="CHEBI:30616"/>
    </ligand>
</feature>
<feature type="binding site" evidence="1">
    <location>
        <begin position="105"/>
        <end position="109"/>
    </location>
    <ligand>
        <name>ATP</name>
        <dbReference type="ChEBI" id="CHEBI:30616"/>
    </ligand>
</feature>
<feature type="binding site" evidence="1">
    <location>
        <position position="512"/>
    </location>
    <ligand>
        <name>ATP</name>
        <dbReference type="ChEBI" id="CHEBI:30616"/>
    </ligand>
</feature>
<feature type="binding site" evidence="1">
    <location>
        <position position="886"/>
    </location>
    <ligand>
        <name>Zn(2+)</name>
        <dbReference type="ChEBI" id="CHEBI:29105"/>
    </ligand>
</feature>
<feature type="binding site" evidence="1">
    <location>
        <position position="888"/>
    </location>
    <ligand>
        <name>Zn(2+)</name>
        <dbReference type="ChEBI" id="CHEBI:29105"/>
    </ligand>
</feature>
<feature type="binding site" evidence="1">
    <location>
        <position position="897"/>
    </location>
    <ligand>
        <name>Zn(2+)</name>
        <dbReference type="ChEBI" id="CHEBI:29105"/>
    </ligand>
</feature>
<feature type="binding site" evidence="1">
    <location>
        <position position="898"/>
    </location>
    <ligand>
        <name>Zn(2+)</name>
        <dbReference type="ChEBI" id="CHEBI:29105"/>
    </ligand>
</feature>
<organism>
    <name type="scientific">Pseudoalteromonas translucida (strain TAC 125)</name>
    <dbReference type="NCBI Taxonomy" id="326442"/>
    <lineage>
        <taxon>Bacteria</taxon>
        <taxon>Pseudomonadati</taxon>
        <taxon>Pseudomonadota</taxon>
        <taxon>Gammaproteobacteria</taxon>
        <taxon>Alteromonadales</taxon>
        <taxon>Pseudoalteromonadaceae</taxon>
        <taxon>Pseudoalteromonas</taxon>
    </lineage>
</organism>